<reference key="1">
    <citation type="submission" date="2007-06" db="EMBL/GenBank/DDBJ databases">
        <authorList>
            <person name="Dodson R.J."/>
            <person name="Harkins D."/>
            <person name="Paulsen I.T."/>
        </authorList>
    </citation>
    <scope>NUCLEOTIDE SEQUENCE [LARGE SCALE GENOMIC DNA]</scope>
    <source>
        <strain>DSM 24068 / PA7</strain>
    </source>
</reference>
<dbReference type="EMBL" id="CP000744">
    <property type="protein sequence ID" value="ABR82688.1"/>
    <property type="molecule type" value="Genomic_DNA"/>
</dbReference>
<dbReference type="RefSeq" id="WP_003093711.1">
    <property type="nucleotide sequence ID" value="NC_009656.1"/>
</dbReference>
<dbReference type="SMR" id="A6UZJ9"/>
<dbReference type="GeneID" id="77219209"/>
<dbReference type="KEGG" id="pap:PSPA7_0848"/>
<dbReference type="HOGENOM" id="CLU_093315_2_2_6"/>
<dbReference type="Proteomes" id="UP000001582">
    <property type="component" value="Chromosome"/>
</dbReference>
<dbReference type="GO" id="GO:1990904">
    <property type="term" value="C:ribonucleoprotein complex"/>
    <property type="evidence" value="ECO:0007669"/>
    <property type="project" value="UniProtKB-KW"/>
</dbReference>
<dbReference type="GO" id="GO:0005840">
    <property type="term" value="C:ribosome"/>
    <property type="evidence" value="ECO:0007669"/>
    <property type="project" value="UniProtKB-KW"/>
</dbReference>
<dbReference type="GO" id="GO:0019843">
    <property type="term" value="F:rRNA binding"/>
    <property type="evidence" value="ECO:0007669"/>
    <property type="project" value="UniProtKB-UniRule"/>
</dbReference>
<dbReference type="GO" id="GO:0003735">
    <property type="term" value="F:structural constituent of ribosome"/>
    <property type="evidence" value="ECO:0007669"/>
    <property type="project" value="InterPro"/>
</dbReference>
<dbReference type="GO" id="GO:0006412">
    <property type="term" value="P:translation"/>
    <property type="evidence" value="ECO:0007669"/>
    <property type="project" value="UniProtKB-UniRule"/>
</dbReference>
<dbReference type="CDD" id="cd06089">
    <property type="entry name" value="KOW_RPL26"/>
    <property type="match status" value="1"/>
</dbReference>
<dbReference type="FunFam" id="2.30.30.30:FF:000004">
    <property type="entry name" value="50S ribosomal protein L24"/>
    <property type="match status" value="1"/>
</dbReference>
<dbReference type="Gene3D" id="2.30.30.30">
    <property type="match status" value="1"/>
</dbReference>
<dbReference type="HAMAP" id="MF_01326_B">
    <property type="entry name" value="Ribosomal_uL24_B"/>
    <property type="match status" value="1"/>
</dbReference>
<dbReference type="InterPro" id="IPR005824">
    <property type="entry name" value="KOW"/>
</dbReference>
<dbReference type="InterPro" id="IPR014722">
    <property type="entry name" value="Rib_uL2_dom2"/>
</dbReference>
<dbReference type="InterPro" id="IPR003256">
    <property type="entry name" value="Ribosomal_uL24"/>
</dbReference>
<dbReference type="InterPro" id="IPR005825">
    <property type="entry name" value="Ribosomal_uL24_CS"/>
</dbReference>
<dbReference type="InterPro" id="IPR041988">
    <property type="entry name" value="Ribosomal_uL24_KOW"/>
</dbReference>
<dbReference type="InterPro" id="IPR008991">
    <property type="entry name" value="Translation_prot_SH3-like_sf"/>
</dbReference>
<dbReference type="NCBIfam" id="TIGR01079">
    <property type="entry name" value="rplX_bact"/>
    <property type="match status" value="1"/>
</dbReference>
<dbReference type="PANTHER" id="PTHR12903">
    <property type="entry name" value="MITOCHONDRIAL RIBOSOMAL PROTEIN L24"/>
    <property type="match status" value="1"/>
</dbReference>
<dbReference type="Pfam" id="PF00467">
    <property type="entry name" value="KOW"/>
    <property type="match status" value="1"/>
</dbReference>
<dbReference type="Pfam" id="PF17136">
    <property type="entry name" value="ribosomal_L24"/>
    <property type="match status" value="1"/>
</dbReference>
<dbReference type="SMART" id="SM00739">
    <property type="entry name" value="KOW"/>
    <property type="match status" value="1"/>
</dbReference>
<dbReference type="SUPFAM" id="SSF50104">
    <property type="entry name" value="Translation proteins SH3-like domain"/>
    <property type="match status" value="1"/>
</dbReference>
<dbReference type="PROSITE" id="PS01108">
    <property type="entry name" value="RIBOSOMAL_L24"/>
    <property type="match status" value="1"/>
</dbReference>
<organism>
    <name type="scientific">Pseudomonas paraeruginosa (strain DSM 24068 / PA7)</name>
    <name type="common">Pseudomonas aeruginosa (strain PA7)</name>
    <dbReference type="NCBI Taxonomy" id="381754"/>
    <lineage>
        <taxon>Bacteria</taxon>
        <taxon>Pseudomonadati</taxon>
        <taxon>Pseudomonadota</taxon>
        <taxon>Gammaproteobacteria</taxon>
        <taxon>Pseudomonadales</taxon>
        <taxon>Pseudomonadaceae</taxon>
        <taxon>Pseudomonas</taxon>
        <taxon>Pseudomonas paraeruginosa</taxon>
    </lineage>
</organism>
<protein>
    <recommendedName>
        <fullName evidence="1">Large ribosomal subunit protein uL24</fullName>
    </recommendedName>
    <alternativeName>
        <fullName evidence="2">50S ribosomal protein L24</fullName>
    </alternativeName>
</protein>
<feature type="chain" id="PRO_1000052277" description="Large ribosomal subunit protein uL24">
    <location>
        <begin position="1"/>
        <end position="104"/>
    </location>
</feature>
<proteinExistence type="inferred from homology"/>
<evidence type="ECO:0000255" key="1">
    <source>
        <dbReference type="HAMAP-Rule" id="MF_01326"/>
    </source>
</evidence>
<evidence type="ECO:0000305" key="2"/>
<accession>A6UZJ9</accession>
<sequence length="104" mass="11470">MQKIRRDDEVIVIAGKDKGKRGKVLKVLADDRLVVGGVNLIKRHTKPNPMLGQQGGIVEKEAPLHVSNVAIFNTETSKADRVGFKVEDGKKIRVFKSTQKPVQA</sequence>
<gene>
    <name evidence="1" type="primary">rplX</name>
    <name type="ordered locus">PSPA7_0848</name>
</gene>
<keyword id="KW-0687">Ribonucleoprotein</keyword>
<keyword id="KW-0689">Ribosomal protein</keyword>
<keyword id="KW-0694">RNA-binding</keyword>
<keyword id="KW-0699">rRNA-binding</keyword>
<name>RL24_PSEP7</name>
<comment type="function">
    <text evidence="1">One of two assembly initiator proteins, it binds directly to the 5'-end of the 23S rRNA, where it nucleates assembly of the 50S subunit.</text>
</comment>
<comment type="function">
    <text evidence="1">One of the proteins that surrounds the polypeptide exit tunnel on the outside of the subunit.</text>
</comment>
<comment type="subunit">
    <text evidence="1">Part of the 50S ribosomal subunit.</text>
</comment>
<comment type="similarity">
    <text evidence="1">Belongs to the universal ribosomal protein uL24 family.</text>
</comment>